<comment type="function">
    <text evidence="1 2 3">Photoreceptor required for image-forming vision at low light intensity. While most salt water fish species use retinal as chromophore, most freshwater fish use 3-dehydroretinal, or a mixture of retinal and 3-dehydroretinal (By similarity). Light-induced isomerization of 11-cis to all-trans retinal triggers a conformational change that activates signaling via G-proteins. Subsequent receptor phosphorylation mediates displacement of the bound G-protein alpha subunit by arrestin and terminates signaling (By similarity).</text>
</comment>
<comment type="subcellular location">
    <subcellularLocation>
        <location evidence="2">Membrane</location>
        <topology evidence="2">Multi-pass membrane protein</topology>
    </subcellularLocation>
    <subcellularLocation>
        <location evidence="4">Cell projection</location>
        <location evidence="4">Cilium</location>
        <location evidence="4">Photoreceptor outer segment</location>
    </subcellularLocation>
    <text evidence="2">Synthesized in the inner segment (IS) of rod photoreceptor cells before vectorial transport to disk membranes in the rod outer segment (OS) photosensory cilia.</text>
</comment>
<comment type="PTM">
    <text evidence="1">Phosphorylated on some or all of the serine and threonine residues present in the C-terminal region.</text>
</comment>
<comment type="PTM">
    <text evidence="1">Contains one covalently linked retinal chromophore.</text>
</comment>
<comment type="similarity">
    <text evidence="6">Belongs to the G-protein coupled receptor 1 family. Opsin subfamily.</text>
</comment>
<feature type="chain" id="PRO_0000197676" description="Rhodopsin">
    <location>
        <begin position="1"/>
        <end position="352"/>
    </location>
</feature>
<feature type="topological domain" description="Extracellular" evidence="8">
    <location>
        <begin position="1"/>
        <end position="36"/>
    </location>
</feature>
<feature type="transmembrane region" description="Helical; Name=1" evidence="1">
    <location>
        <begin position="37"/>
        <end position="61"/>
    </location>
</feature>
<feature type="topological domain" description="Cytoplasmic" evidence="8">
    <location>
        <begin position="62"/>
        <end position="73"/>
    </location>
</feature>
<feature type="transmembrane region" description="Helical; Name=2" evidence="1">
    <location>
        <begin position="74"/>
        <end position="96"/>
    </location>
</feature>
<feature type="topological domain" description="Extracellular" evidence="8">
    <location>
        <begin position="97"/>
        <end position="110"/>
    </location>
</feature>
<feature type="transmembrane region" description="Helical; Name=3" evidence="1">
    <location>
        <begin position="111"/>
        <end position="133"/>
    </location>
</feature>
<feature type="topological domain" description="Cytoplasmic" evidence="8">
    <location>
        <begin position="134"/>
        <end position="152"/>
    </location>
</feature>
<feature type="transmembrane region" description="Helical; Name=4" evidence="1">
    <location>
        <begin position="153"/>
        <end position="173"/>
    </location>
</feature>
<feature type="topological domain" description="Extracellular" evidence="8">
    <location>
        <begin position="174"/>
        <end position="202"/>
    </location>
</feature>
<feature type="transmembrane region" description="Helical; Name=5" evidence="1">
    <location>
        <begin position="203"/>
        <end position="224"/>
    </location>
</feature>
<feature type="topological domain" description="Cytoplasmic" evidence="8">
    <location>
        <begin position="225"/>
        <end position="252"/>
    </location>
</feature>
<feature type="transmembrane region" description="Helical; Name=6" evidence="1">
    <location>
        <begin position="253"/>
        <end position="274"/>
    </location>
</feature>
<feature type="topological domain" description="Extracellular" evidence="8">
    <location>
        <begin position="275"/>
        <end position="286"/>
    </location>
</feature>
<feature type="transmembrane region" description="Helical; Name=7" evidence="1">
    <location>
        <begin position="287"/>
        <end position="308"/>
    </location>
</feature>
<feature type="topological domain" description="Cytoplasmic" evidence="8">
    <location>
        <begin position="309"/>
        <end position="352"/>
    </location>
</feature>
<feature type="region of interest" description="Disordered" evidence="7">
    <location>
        <begin position="331"/>
        <end position="352"/>
    </location>
</feature>
<feature type="short sequence motif" description="'Ionic lock' involved in activated form stabilization" evidence="1">
    <location>
        <begin position="134"/>
        <end position="136"/>
    </location>
</feature>
<feature type="compositionally biased region" description="Low complexity" evidence="7">
    <location>
        <begin position="342"/>
        <end position="352"/>
    </location>
</feature>
<feature type="site" description="Plays an important role in the conformation switch to the active conformation" evidence="1">
    <location>
        <position position="113"/>
    </location>
</feature>
<feature type="modified residue" description="N6-(retinylidene)lysine" evidence="1">
    <location>
        <position position="296"/>
    </location>
</feature>
<feature type="lipid moiety-binding region" description="S-palmitoyl cysteine" evidence="1">
    <location>
        <position position="322"/>
    </location>
</feature>
<feature type="lipid moiety-binding region" description="S-palmitoyl cysteine" evidence="1">
    <location>
        <position position="323"/>
    </location>
</feature>
<feature type="glycosylation site" description="N-linked (GlcNAc...) asparagine" evidence="5">
    <location>
        <position position="2"/>
    </location>
</feature>
<feature type="glycosylation site" description="N-linked (GlcNAc...) asparagine" evidence="5">
    <location>
        <position position="15"/>
    </location>
</feature>
<feature type="glycosylation site" description="N-linked (GlcNAc...) asparagine" evidence="5">
    <location>
        <position position="200"/>
    </location>
</feature>
<feature type="disulfide bond" evidence="6">
    <location>
        <begin position="110"/>
        <end position="187"/>
    </location>
</feature>
<protein>
    <recommendedName>
        <fullName>Rhodopsin</fullName>
    </recommendedName>
</protein>
<keyword id="KW-0966">Cell projection</keyword>
<keyword id="KW-0157">Chromophore</keyword>
<keyword id="KW-1015">Disulfide bond</keyword>
<keyword id="KW-0297">G-protein coupled receptor</keyword>
<keyword id="KW-0325">Glycoprotein</keyword>
<keyword id="KW-0449">Lipoprotein</keyword>
<keyword id="KW-0472">Membrane</keyword>
<keyword id="KW-0564">Palmitate</keyword>
<keyword id="KW-0597">Phosphoprotein</keyword>
<keyword id="KW-0600">Photoreceptor protein</keyword>
<keyword id="KW-0675">Receptor</keyword>
<keyword id="KW-0681">Retinal protein</keyword>
<keyword id="KW-0716">Sensory transduction</keyword>
<keyword id="KW-0807">Transducer</keyword>
<keyword id="KW-0812">Transmembrane</keyword>
<keyword id="KW-1133">Transmembrane helix</keyword>
<keyword id="KW-0844">Vision</keyword>
<gene>
    <name type="primary">rho</name>
</gene>
<evidence type="ECO:0000250" key="1">
    <source>
        <dbReference type="UniProtKB" id="P02699"/>
    </source>
</evidence>
<evidence type="ECO:0000250" key="2">
    <source>
        <dbReference type="UniProtKB" id="P08100"/>
    </source>
</evidence>
<evidence type="ECO:0000250" key="3">
    <source>
        <dbReference type="UniProtKB" id="P32309"/>
    </source>
</evidence>
<evidence type="ECO:0000250" key="4">
    <source>
        <dbReference type="UniProtKB" id="P35359"/>
    </source>
</evidence>
<evidence type="ECO:0000255" key="5"/>
<evidence type="ECO:0000255" key="6">
    <source>
        <dbReference type="PROSITE-ProRule" id="PRU00521"/>
    </source>
</evidence>
<evidence type="ECO:0000256" key="7">
    <source>
        <dbReference type="SAM" id="MobiDB-lite"/>
    </source>
</evidence>
<evidence type="ECO:0000305" key="8"/>
<sequence>MNGTEGPFFYIPMVNTTGVVRSPYEYPQYYLVNPAAYACLGAYMFFLILVGFPVNFLTLYVTLEHKKLRTPLNYILLNLAVADLFMVFGGFTTTIYTSMHGYFVLGRLGCNIEGFFATLGGEIALWSLVVLAIERWVVVCKPISNFRFGENHAIMGVAFTWFMASACAVPPLVGWSRYIPEGMQCSCGIDYYTRAEGFNNESFVIYMFTVHFCIPLAVVGFCYGRLLCAVKEAAAAQQESETTQRAEREVSRMVVIMVIGFLVCWLPYASVAWYIFTHQGSEFGPLFMTIPAFFAKSSSIYNPMIYICMNKQFRHCMITTLCCGKNPFEEEEGASTTKTEASSVSSSSVSPA</sequence>
<proteinExistence type="evidence at transcript level"/>
<accession>Q9YGZ2</accession>
<reference key="1">
    <citation type="submission" date="1999-01" db="EMBL/GenBank/DDBJ databases">
        <title>Comparative analysis of opsins in Mediterranian coastal fish.</title>
        <authorList>
            <person name="Archer S.N."/>
            <person name="Hirano J."/>
        </authorList>
    </citation>
    <scope>NUCLEOTIDE SEQUENCE [MRNA]</scope>
    <source>
        <tissue>Retina</tissue>
    </source>
</reference>
<dbReference type="EMBL" id="Y18675">
    <property type="protein sequence ID" value="CAA77257.1"/>
    <property type="molecule type" value="mRNA"/>
</dbReference>
<dbReference type="SMR" id="Q9YGZ2"/>
<dbReference type="GlyCosmos" id="Q9YGZ2">
    <property type="glycosylation" value="3 sites, No reported glycans"/>
</dbReference>
<dbReference type="GO" id="GO:0016020">
    <property type="term" value="C:membrane"/>
    <property type="evidence" value="ECO:0000250"/>
    <property type="project" value="UniProtKB"/>
</dbReference>
<dbReference type="GO" id="GO:0097381">
    <property type="term" value="C:photoreceptor disc membrane"/>
    <property type="evidence" value="ECO:0000250"/>
    <property type="project" value="UniProtKB"/>
</dbReference>
<dbReference type="GO" id="GO:0005886">
    <property type="term" value="C:plasma membrane"/>
    <property type="evidence" value="ECO:0000250"/>
    <property type="project" value="UniProtKB"/>
</dbReference>
<dbReference type="GO" id="GO:0005502">
    <property type="term" value="F:11-cis retinal binding"/>
    <property type="evidence" value="ECO:0000250"/>
    <property type="project" value="UniProtKB"/>
</dbReference>
<dbReference type="GO" id="GO:0008020">
    <property type="term" value="F:G protein-coupled photoreceptor activity"/>
    <property type="evidence" value="ECO:0000250"/>
    <property type="project" value="UniProtKB"/>
</dbReference>
<dbReference type="GO" id="GO:0016038">
    <property type="term" value="P:absorption of visible light"/>
    <property type="evidence" value="ECO:0000250"/>
    <property type="project" value="UniProtKB"/>
</dbReference>
<dbReference type="GO" id="GO:0016056">
    <property type="term" value="P:G protein-coupled opsin signaling pathway"/>
    <property type="evidence" value="ECO:0000250"/>
    <property type="project" value="UniProtKB"/>
</dbReference>
<dbReference type="GO" id="GO:0007601">
    <property type="term" value="P:visual perception"/>
    <property type="evidence" value="ECO:0007669"/>
    <property type="project" value="UniProtKB-KW"/>
</dbReference>
<dbReference type="CDD" id="cd15080">
    <property type="entry name" value="7tmA_MWS_opsin"/>
    <property type="match status" value="1"/>
</dbReference>
<dbReference type="FunFam" id="1.20.1070.10:FF:000018">
    <property type="entry name" value="Rhodopsin"/>
    <property type="match status" value="1"/>
</dbReference>
<dbReference type="Gene3D" id="1.20.1070.10">
    <property type="entry name" value="Rhodopsin 7-helix transmembrane proteins"/>
    <property type="match status" value="1"/>
</dbReference>
<dbReference type="InterPro" id="IPR050125">
    <property type="entry name" value="GPCR_opsins"/>
</dbReference>
<dbReference type="InterPro" id="IPR000276">
    <property type="entry name" value="GPCR_Rhodpsn"/>
</dbReference>
<dbReference type="InterPro" id="IPR017452">
    <property type="entry name" value="GPCR_Rhodpsn_7TM"/>
</dbReference>
<dbReference type="InterPro" id="IPR001760">
    <property type="entry name" value="Opsin"/>
</dbReference>
<dbReference type="InterPro" id="IPR027430">
    <property type="entry name" value="Retinal_BS"/>
</dbReference>
<dbReference type="InterPro" id="IPR000732">
    <property type="entry name" value="Rhodopsin"/>
</dbReference>
<dbReference type="InterPro" id="IPR019477">
    <property type="entry name" value="Rhodopsin_N"/>
</dbReference>
<dbReference type="PANTHER" id="PTHR24240">
    <property type="entry name" value="OPSIN"/>
    <property type="match status" value="1"/>
</dbReference>
<dbReference type="Pfam" id="PF00001">
    <property type="entry name" value="7tm_1"/>
    <property type="match status" value="1"/>
</dbReference>
<dbReference type="Pfam" id="PF10413">
    <property type="entry name" value="Rhodopsin_N"/>
    <property type="match status" value="1"/>
</dbReference>
<dbReference type="PRINTS" id="PR00237">
    <property type="entry name" value="GPCRRHODOPSN"/>
</dbReference>
<dbReference type="PRINTS" id="PR00238">
    <property type="entry name" value="OPSIN"/>
</dbReference>
<dbReference type="PRINTS" id="PR00579">
    <property type="entry name" value="RHODOPSIN"/>
</dbReference>
<dbReference type="SUPFAM" id="SSF81321">
    <property type="entry name" value="Family A G protein-coupled receptor-like"/>
    <property type="match status" value="1"/>
</dbReference>
<dbReference type="PROSITE" id="PS00237">
    <property type="entry name" value="G_PROTEIN_RECEP_F1_1"/>
    <property type="match status" value="1"/>
</dbReference>
<dbReference type="PROSITE" id="PS50262">
    <property type="entry name" value="G_PROTEIN_RECEP_F1_2"/>
    <property type="match status" value="1"/>
</dbReference>
<dbReference type="PROSITE" id="PS00238">
    <property type="entry name" value="OPSIN"/>
    <property type="match status" value="1"/>
</dbReference>
<organism>
    <name type="scientific">Gobius niger</name>
    <name type="common">Black goby</name>
    <dbReference type="NCBI Taxonomy" id="85417"/>
    <lineage>
        <taxon>Eukaryota</taxon>
        <taxon>Metazoa</taxon>
        <taxon>Chordata</taxon>
        <taxon>Craniata</taxon>
        <taxon>Vertebrata</taxon>
        <taxon>Euteleostomi</taxon>
        <taxon>Actinopterygii</taxon>
        <taxon>Neopterygii</taxon>
        <taxon>Teleostei</taxon>
        <taxon>Neoteleostei</taxon>
        <taxon>Acanthomorphata</taxon>
        <taxon>Gobiaria</taxon>
        <taxon>Gobiiformes</taxon>
        <taxon>Gobioidei</taxon>
        <taxon>Gobiidae</taxon>
        <taxon>Gobiinae</taxon>
        <taxon>Gobius</taxon>
    </lineage>
</organism>
<name>OPSD_GOBNI</name>